<proteinExistence type="inferred from homology"/>
<sequence>MAVPKRRTSKKVKNQRRTHKKLHVPGMVECSNCGELTKPHRVCKSCGHYDGKEVVNG</sequence>
<reference key="1">
    <citation type="journal article" date="2002" name="Nucleic Acids Res.">
        <title>Genome sequence of Oceanobacillus iheyensis isolated from the Iheya Ridge and its unexpected adaptive capabilities to extreme environments.</title>
        <authorList>
            <person name="Takami H."/>
            <person name="Takaki Y."/>
            <person name="Uchiyama I."/>
        </authorList>
    </citation>
    <scope>NUCLEOTIDE SEQUENCE [LARGE SCALE GENOMIC DNA]</scope>
    <source>
        <strain>DSM 14371 / CIP 107618 / JCM 11309 / KCTC 3954 / HTE831</strain>
    </source>
</reference>
<protein>
    <recommendedName>
        <fullName evidence="1">Large ribosomal subunit protein bL32</fullName>
    </recommendedName>
    <alternativeName>
        <fullName evidence="3">50S ribosomal protein L32</fullName>
    </alternativeName>
</protein>
<comment type="similarity">
    <text evidence="1">Belongs to the bacterial ribosomal protein bL32 family.</text>
</comment>
<dbReference type="EMBL" id="BA000028">
    <property type="protein sequence ID" value="BAC13412.1"/>
    <property type="molecule type" value="Genomic_DNA"/>
</dbReference>
<dbReference type="RefSeq" id="WP_011065857.1">
    <property type="nucleotide sequence ID" value="NC_004193.1"/>
</dbReference>
<dbReference type="SMR" id="Q8ER59"/>
<dbReference type="STRING" id="221109.gene:10733696"/>
<dbReference type="KEGG" id="oih:OB1456"/>
<dbReference type="eggNOG" id="COG0333">
    <property type="taxonomic scope" value="Bacteria"/>
</dbReference>
<dbReference type="HOGENOM" id="CLU_129084_1_3_9"/>
<dbReference type="OrthoDB" id="9812874at2"/>
<dbReference type="PhylomeDB" id="Q8ER59"/>
<dbReference type="Proteomes" id="UP000000822">
    <property type="component" value="Chromosome"/>
</dbReference>
<dbReference type="GO" id="GO:0015934">
    <property type="term" value="C:large ribosomal subunit"/>
    <property type="evidence" value="ECO:0007669"/>
    <property type="project" value="InterPro"/>
</dbReference>
<dbReference type="GO" id="GO:0003735">
    <property type="term" value="F:structural constituent of ribosome"/>
    <property type="evidence" value="ECO:0007669"/>
    <property type="project" value="InterPro"/>
</dbReference>
<dbReference type="GO" id="GO:0006412">
    <property type="term" value="P:translation"/>
    <property type="evidence" value="ECO:0007669"/>
    <property type="project" value="UniProtKB-UniRule"/>
</dbReference>
<dbReference type="HAMAP" id="MF_00340">
    <property type="entry name" value="Ribosomal_bL32"/>
    <property type="match status" value="1"/>
</dbReference>
<dbReference type="InterPro" id="IPR002677">
    <property type="entry name" value="Ribosomal_bL32"/>
</dbReference>
<dbReference type="InterPro" id="IPR044957">
    <property type="entry name" value="Ribosomal_bL32_bact"/>
</dbReference>
<dbReference type="InterPro" id="IPR011332">
    <property type="entry name" value="Ribosomal_zn-bd"/>
</dbReference>
<dbReference type="NCBIfam" id="TIGR01031">
    <property type="entry name" value="rpmF_bact"/>
    <property type="match status" value="1"/>
</dbReference>
<dbReference type="PANTHER" id="PTHR35534">
    <property type="entry name" value="50S RIBOSOMAL PROTEIN L32"/>
    <property type="match status" value="1"/>
</dbReference>
<dbReference type="PANTHER" id="PTHR35534:SF2">
    <property type="entry name" value="LARGE RIBOSOMAL SUBUNIT PROTEIN BL32"/>
    <property type="match status" value="1"/>
</dbReference>
<dbReference type="Pfam" id="PF01783">
    <property type="entry name" value="Ribosomal_L32p"/>
    <property type="match status" value="1"/>
</dbReference>
<dbReference type="SUPFAM" id="SSF57829">
    <property type="entry name" value="Zn-binding ribosomal proteins"/>
    <property type="match status" value="1"/>
</dbReference>
<keyword id="KW-1185">Reference proteome</keyword>
<keyword id="KW-0687">Ribonucleoprotein</keyword>
<keyword id="KW-0689">Ribosomal protein</keyword>
<name>RL32_OCEIH</name>
<accession>Q8ER59</accession>
<evidence type="ECO:0000255" key="1">
    <source>
        <dbReference type="HAMAP-Rule" id="MF_00340"/>
    </source>
</evidence>
<evidence type="ECO:0000256" key="2">
    <source>
        <dbReference type="SAM" id="MobiDB-lite"/>
    </source>
</evidence>
<evidence type="ECO:0000305" key="3"/>
<organism>
    <name type="scientific">Oceanobacillus iheyensis (strain DSM 14371 / CIP 107618 / JCM 11309 / KCTC 3954 / HTE831)</name>
    <dbReference type="NCBI Taxonomy" id="221109"/>
    <lineage>
        <taxon>Bacteria</taxon>
        <taxon>Bacillati</taxon>
        <taxon>Bacillota</taxon>
        <taxon>Bacilli</taxon>
        <taxon>Bacillales</taxon>
        <taxon>Bacillaceae</taxon>
        <taxon>Oceanobacillus</taxon>
    </lineage>
</organism>
<gene>
    <name evidence="1" type="primary">rpmF</name>
    <name type="ordered locus">OB1456</name>
</gene>
<feature type="chain" id="PRO_0000172378" description="Large ribosomal subunit protein bL32">
    <location>
        <begin position="1"/>
        <end position="57"/>
    </location>
</feature>
<feature type="region of interest" description="Disordered" evidence="2">
    <location>
        <begin position="1"/>
        <end position="21"/>
    </location>
</feature>